<gene>
    <name evidence="1" type="primary">fusA</name>
    <name type="ordered locus">Cgl0495</name>
    <name type="ordered locus">cg0583</name>
</gene>
<accession>Q8NT19</accession>
<organism>
    <name type="scientific">Corynebacterium glutamicum (strain ATCC 13032 / DSM 20300 / JCM 1318 / BCRC 11384 / CCUG 27702 / LMG 3730 / NBRC 12168 / NCIMB 10025 / NRRL B-2784 / 534)</name>
    <dbReference type="NCBI Taxonomy" id="196627"/>
    <lineage>
        <taxon>Bacteria</taxon>
        <taxon>Bacillati</taxon>
        <taxon>Actinomycetota</taxon>
        <taxon>Actinomycetes</taxon>
        <taxon>Mycobacteriales</taxon>
        <taxon>Corynebacteriaceae</taxon>
        <taxon>Corynebacterium</taxon>
    </lineage>
</organism>
<protein>
    <recommendedName>
        <fullName evidence="1">Elongation factor G</fullName>
        <shortName evidence="1">EF-G</shortName>
    </recommendedName>
</protein>
<name>EFG_CORGL</name>
<keyword id="KW-0963">Cytoplasm</keyword>
<keyword id="KW-0251">Elongation factor</keyword>
<keyword id="KW-0342">GTP-binding</keyword>
<keyword id="KW-0547">Nucleotide-binding</keyword>
<keyword id="KW-0648">Protein biosynthesis</keyword>
<keyword id="KW-1185">Reference proteome</keyword>
<feature type="chain" id="PRO_0000091113" description="Elongation factor G">
    <location>
        <begin position="1"/>
        <end position="705"/>
    </location>
</feature>
<feature type="domain" description="tr-type G">
    <location>
        <begin position="6"/>
        <end position="282"/>
    </location>
</feature>
<feature type="binding site" evidence="1">
    <location>
        <begin position="15"/>
        <end position="22"/>
    </location>
    <ligand>
        <name>GTP</name>
        <dbReference type="ChEBI" id="CHEBI:37565"/>
    </ligand>
</feature>
<feature type="binding site" evidence="1">
    <location>
        <begin position="79"/>
        <end position="83"/>
    </location>
    <ligand>
        <name>GTP</name>
        <dbReference type="ChEBI" id="CHEBI:37565"/>
    </ligand>
</feature>
<feature type="binding site" evidence="1">
    <location>
        <begin position="133"/>
        <end position="136"/>
    </location>
    <ligand>
        <name>GTP</name>
        <dbReference type="ChEBI" id="CHEBI:37565"/>
    </ligand>
</feature>
<dbReference type="EMBL" id="BA000036">
    <property type="protein sequence ID" value="BAB97888.1"/>
    <property type="molecule type" value="Genomic_DNA"/>
</dbReference>
<dbReference type="EMBL" id="BX927149">
    <property type="protein sequence ID" value="CAF19209.1"/>
    <property type="status" value="ALT_INIT"/>
    <property type="molecule type" value="Genomic_DNA"/>
</dbReference>
<dbReference type="RefSeq" id="NP_599740.1">
    <property type="nucleotide sequence ID" value="NC_003450.3"/>
</dbReference>
<dbReference type="SMR" id="Q8NT19"/>
<dbReference type="STRING" id="196627.cg0583"/>
<dbReference type="KEGG" id="cgb:cg0583"/>
<dbReference type="KEGG" id="cgl:Cgl0495"/>
<dbReference type="PATRIC" id="fig|196627.13.peg.494"/>
<dbReference type="eggNOG" id="COG0480">
    <property type="taxonomic scope" value="Bacteria"/>
</dbReference>
<dbReference type="HOGENOM" id="CLU_002794_4_1_11"/>
<dbReference type="OrthoDB" id="9801472at2"/>
<dbReference type="BioCyc" id="CORYNE:G18NG-10057-MONOMER"/>
<dbReference type="Proteomes" id="UP000000582">
    <property type="component" value="Chromosome"/>
</dbReference>
<dbReference type="Proteomes" id="UP000001009">
    <property type="component" value="Chromosome"/>
</dbReference>
<dbReference type="GO" id="GO:0005737">
    <property type="term" value="C:cytoplasm"/>
    <property type="evidence" value="ECO:0007669"/>
    <property type="project" value="UniProtKB-SubCell"/>
</dbReference>
<dbReference type="GO" id="GO:0005525">
    <property type="term" value="F:GTP binding"/>
    <property type="evidence" value="ECO:0007669"/>
    <property type="project" value="UniProtKB-UniRule"/>
</dbReference>
<dbReference type="GO" id="GO:0003924">
    <property type="term" value="F:GTPase activity"/>
    <property type="evidence" value="ECO:0007669"/>
    <property type="project" value="InterPro"/>
</dbReference>
<dbReference type="GO" id="GO:0003746">
    <property type="term" value="F:translation elongation factor activity"/>
    <property type="evidence" value="ECO:0007669"/>
    <property type="project" value="UniProtKB-UniRule"/>
</dbReference>
<dbReference type="GO" id="GO:0032790">
    <property type="term" value="P:ribosome disassembly"/>
    <property type="evidence" value="ECO:0007669"/>
    <property type="project" value="TreeGrafter"/>
</dbReference>
<dbReference type="CDD" id="cd01886">
    <property type="entry name" value="EF-G"/>
    <property type="match status" value="1"/>
</dbReference>
<dbReference type="CDD" id="cd16262">
    <property type="entry name" value="EFG_III"/>
    <property type="match status" value="1"/>
</dbReference>
<dbReference type="CDD" id="cd01434">
    <property type="entry name" value="EFG_mtEFG1_IV"/>
    <property type="match status" value="1"/>
</dbReference>
<dbReference type="CDD" id="cd03713">
    <property type="entry name" value="EFG_mtEFG_C"/>
    <property type="match status" value="1"/>
</dbReference>
<dbReference type="CDD" id="cd04088">
    <property type="entry name" value="EFG_mtEFG_II"/>
    <property type="match status" value="1"/>
</dbReference>
<dbReference type="FunFam" id="2.40.30.10:FF:000006">
    <property type="entry name" value="Elongation factor G"/>
    <property type="match status" value="1"/>
</dbReference>
<dbReference type="FunFam" id="3.30.230.10:FF:000003">
    <property type="entry name" value="Elongation factor G"/>
    <property type="match status" value="1"/>
</dbReference>
<dbReference type="FunFam" id="3.30.70.240:FF:000001">
    <property type="entry name" value="Elongation factor G"/>
    <property type="match status" value="1"/>
</dbReference>
<dbReference type="FunFam" id="3.30.70.870:FF:000001">
    <property type="entry name" value="Elongation factor G"/>
    <property type="match status" value="1"/>
</dbReference>
<dbReference type="FunFam" id="3.40.50.300:FF:000029">
    <property type="entry name" value="Elongation factor G"/>
    <property type="match status" value="1"/>
</dbReference>
<dbReference type="Gene3D" id="3.30.230.10">
    <property type="match status" value="1"/>
</dbReference>
<dbReference type="Gene3D" id="3.30.70.240">
    <property type="match status" value="1"/>
</dbReference>
<dbReference type="Gene3D" id="3.30.70.870">
    <property type="entry name" value="Elongation Factor G (Translational Gtpase), domain 3"/>
    <property type="match status" value="1"/>
</dbReference>
<dbReference type="Gene3D" id="3.40.50.300">
    <property type="entry name" value="P-loop containing nucleotide triphosphate hydrolases"/>
    <property type="match status" value="1"/>
</dbReference>
<dbReference type="Gene3D" id="2.40.30.10">
    <property type="entry name" value="Translation factors"/>
    <property type="match status" value="1"/>
</dbReference>
<dbReference type="HAMAP" id="MF_00054_B">
    <property type="entry name" value="EF_G_EF_2_B"/>
    <property type="match status" value="1"/>
</dbReference>
<dbReference type="InterPro" id="IPR041095">
    <property type="entry name" value="EFG_II"/>
</dbReference>
<dbReference type="InterPro" id="IPR009022">
    <property type="entry name" value="EFG_III"/>
</dbReference>
<dbReference type="InterPro" id="IPR035647">
    <property type="entry name" value="EFG_III/V"/>
</dbReference>
<dbReference type="InterPro" id="IPR047872">
    <property type="entry name" value="EFG_IV"/>
</dbReference>
<dbReference type="InterPro" id="IPR035649">
    <property type="entry name" value="EFG_V"/>
</dbReference>
<dbReference type="InterPro" id="IPR000640">
    <property type="entry name" value="EFG_V-like"/>
</dbReference>
<dbReference type="InterPro" id="IPR004161">
    <property type="entry name" value="EFTu-like_2"/>
</dbReference>
<dbReference type="InterPro" id="IPR031157">
    <property type="entry name" value="G_TR_CS"/>
</dbReference>
<dbReference type="InterPro" id="IPR027417">
    <property type="entry name" value="P-loop_NTPase"/>
</dbReference>
<dbReference type="InterPro" id="IPR020568">
    <property type="entry name" value="Ribosomal_Su5_D2-typ_SF"/>
</dbReference>
<dbReference type="InterPro" id="IPR014721">
    <property type="entry name" value="Ribsml_uS5_D2-typ_fold_subgr"/>
</dbReference>
<dbReference type="InterPro" id="IPR005225">
    <property type="entry name" value="Small_GTP-bd"/>
</dbReference>
<dbReference type="InterPro" id="IPR000795">
    <property type="entry name" value="T_Tr_GTP-bd_dom"/>
</dbReference>
<dbReference type="InterPro" id="IPR009000">
    <property type="entry name" value="Transl_B-barrel_sf"/>
</dbReference>
<dbReference type="InterPro" id="IPR004540">
    <property type="entry name" value="Transl_elong_EFG/EF2"/>
</dbReference>
<dbReference type="InterPro" id="IPR005517">
    <property type="entry name" value="Transl_elong_EFG/EF2_IV"/>
</dbReference>
<dbReference type="NCBIfam" id="TIGR00484">
    <property type="entry name" value="EF-G"/>
    <property type="match status" value="1"/>
</dbReference>
<dbReference type="NCBIfam" id="NF009381">
    <property type="entry name" value="PRK12740.1-5"/>
    <property type="match status" value="1"/>
</dbReference>
<dbReference type="NCBIfam" id="TIGR00231">
    <property type="entry name" value="small_GTP"/>
    <property type="match status" value="1"/>
</dbReference>
<dbReference type="PANTHER" id="PTHR43261:SF1">
    <property type="entry name" value="RIBOSOME-RELEASING FACTOR 2, MITOCHONDRIAL"/>
    <property type="match status" value="1"/>
</dbReference>
<dbReference type="PANTHER" id="PTHR43261">
    <property type="entry name" value="TRANSLATION ELONGATION FACTOR G-RELATED"/>
    <property type="match status" value="1"/>
</dbReference>
<dbReference type="Pfam" id="PF00679">
    <property type="entry name" value="EFG_C"/>
    <property type="match status" value="1"/>
</dbReference>
<dbReference type="Pfam" id="PF14492">
    <property type="entry name" value="EFG_III"/>
    <property type="match status" value="1"/>
</dbReference>
<dbReference type="Pfam" id="PF03764">
    <property type="entry name" value="EFG_IV"/>
    <property type="match status" value="1"/>
</dbReference>
<dbReference type="Pfam" id="PF00009">
    <property type="entry name" value="GTP_EFTU"/>
    <property type="match status" value="1"/>
</dbReference>
<dbReference type="Pfam" id="PF03144">
    <property type="entry name" value="GTP_EFTU_D2"/>
    <property type="match status" value="1"/>
</dbReference>
<dbReference type="PRINTS" id="PR00315">
    <property type="entry name" value="ELONGATNFCT"/>
</dbReference>
<dbReference type="SMART" id="SM00838">
    <property type="entry name" value="EFG_C"/>
    <property type="match status" value="1"/>
</dbReference>
<dbReference type="SMART" id="SM00889">
    <property type="entry name" value="EFG_IV"/>
    <property type="match status" value="1"/>
</dbReference>
<dbReference type="SUPFAM" id="SSF54980">
    <property type="entry name" value="EF-G C-terminal domain-like"/>
    <property type="match status" value="2"/>
</dbReference>
<dbReference type="SUPFAM" id="SSF52540">
    <property type="entry name" value="P-loop containing nucleoside triphosphate hydrolases"/>
    <property type="match status" value="1"/>
</dbReference>
<dbReference type="SUPFAM" id="SSF54211">
    <property type="entry name" value="Ribosomal protein S5 domain 2-like"/>
    <property type="match status" value="1"/>
</dbReference>
<dbReference type="SUPFAM" id="SSF50447">
    <property type="entry name" value="Translation proteins"/>
    <property type="match status" value="1"/>
</dbReference>
<dbReference type="PROSITE" id="PS00301">
    <property type="entry name" value="G_TR_1"/>
    <property type="match status" value="1"/>
</dbReference>
<dbReference type="PROSITE" id="PS51722">
    <property type="entry name" value="G_TR_2"/>
    <property type="match status" value="1"/>
</dbReference>
<comment type="function">
    <text evidence="1">Catalyzes the GTP-dependent ribosomal translocation step during translation elongation. During this step, the ribosome changes from the pre-translocational (PRE) to the post-translocational (POST) state as the newly formed A-site-bound peptidyl-tRNA and P-site-bound deacylated tRNA move to the P and E sites, respectively. Catalyzes the coordinated movement of the two tRNA molecules, the mRNA and conformational changes in the ribosome.</text>
</comment>
<comment type="subcellular location">
    <subcellularLocation>
        <location evidence="1">Cytoplasm</location>
    </subcellularLocation>
</comment>
<comment type="similarity">
    <text evidence="1">Belongs to the TRAFAC class translation factor GTPase superfamily. Classic translation factor GTPase family. EF-G/EF-2 subfamily.</text>
</comment>
<comment type="sequence caution" evidence="2">
    <conflict type="erroneous initiation">
        <sequence resource="EMBL-CDS" id="CAF19209"/>
    </conflict>
</comment>
<proteinExistence type="inferred from homology"/>
<evidence type="ECO:0000255" key="1">
    <source>
        <dbReference type="HAMAP-Rule" id="MF_00054"/>
    </source>
</evidence>
<evidence type="ECO:0000305" key="2"/>
<sequence length="705" mass="77464">MLKDLNKVRNIGIMAHIDAGKTTTTERILFYTGINRKVGETHDGGATTDWMEQEKERGITITSAAVTCFWDNNQVNIIDTPGHVDFTVEVERSLRVLDGAVAVFDGKEGVEPQSEQVWRQATKYDVPRICFVNKMDKLGADFYFTVGTIEDRLGAKPLVMQLPIGAEDNFDGVIDLLEMKALTWRGVTPIGTEATVEEIPAELADRAAEYREKLLETVAESDEELMEKYFGGEELSIAEIKAAIRKMVVNSEIYPVYCGTAYKNKGIQPLLDAVVDFLPSPLDLGETKGTDVKDPEKVLTRKPSDEEPLSALAFKIAAHPFFGKLTFVRLYSGKVEPGEQVLNSTKNKKERIGKLFQMHANKENPVEVAHAGNIYAFIGLKDTTTGDTLCDANAPIILESMDFPDPVIQVAIEPKTKSDQEKLGVAIQKLAEEDPTFTVHLDDESGQTVIGGMGELHLDVLVDRMKREFKVEANIGDPQVAYRETIRKPVESLSYTHKKQTGGSGQFAKVIITIEPYAPEADELEEGESAIYKFENAVTGGRVPREYIPSVDAGIQDAMQYGFLAGYPLVNVKATLEDGAYHDVDSSEMAFKLAGSQAFKEAVAKAKPVLLEPIMSVEITTPEEYMGEVIGDVNSRRGQIASMDDRAGAKLVKAKVPLSQMFGYVGDLRSKTQGRANYSMVFDSYAEVPANVAADVIAERNGTAS</sequence>
<reference key="1">
    <citation type="journal article" date="2003" name="Appl. Microbiol. Biotechnol.">
        <title>The Corynebacterium glutamicum genome: features and impacts on biotechnological processes.</title>
        <authorList>
            <person name="Ikeda M."/>
            <person name="Nakagawa S."/>
        </authorList>
    </citation>
    <scope>NUCLEOTIDE SEQUENCE [LARGE SCALE GENOMIC DNA]</scope>
    <source>
        <strain>ATCC 13032 / DSM 20300 / JCM 1318 / BCRC 11384 / CCUG 27702 / LMG 3730 / NBRC 12168 / NCIMB 10025 / NRRL B-2784 / 534</strain>
    </source>
</reference>
<reference key="2">
    <citation type="journal article" date="2003" name="J. Biotechnol.">
        <title>The complete Corynebacterium glutamicum ATCC 13032 genome sequence and its impact on the production of L-aspartate-derived amino acids and vitamins.</title>
        <authorList>
            <person name="Kalinowski J."/>
            <person name="Bathe B."/>
            <person name="Bartels D."/>
            <person name="Bischoff N."/>
            <person name="Bott M."/>
            <person name="Burkovski A."/>
            <person name="Dusch N."/>
            <person name="Eggeling L."/>
            <person name="Eikmanns B.J."/>
            <person name="Gaigalat L."/>
            <person name="Goesmann A."/>
            <person name="Hartmann M."/>
            <person name="Huthmacher K."/>
            <person name="Kraemer R."/>
            <person name="Linke B."/>
            <person name="McHardy A.C."/>
            <person name="Meyer F."/>
            <person name="Moeckel B."/>
            <person name="Pfefferle W."/>
            <person name="Puehler A."/>
            <person name="Rey D.A."/>
            <person name="Rueckert C."/>
            <person name="Rupp O."/>
            <person name="Sahm H."/>
            <person name="Wendisch V.F."/>
            <person name="Wiegraebe I."/>
            <person name="Tauch A."/>
        </authorList>
    </citation>
    <scope>NUCLEOTIDE SEQUENCE [LARGE SCALE GENOMIC DNA]</scope>
    <source>
        <strain>ATCC 13032 / DSM 20300 / JCM 1318 / BCRC 11384 / CCUG 27702 / LMG 3730 / NBRC 12168 / NCIMB 10025 / NRRL B-2784 / 534</strain>
    </source>
</reference>